<gene>
    <name evidence="6" type="primary">SSL7</name>
    <name evidence="8" type="ordered locus">At3g51450</name>
    <name evidence="9" type="ORF">F26O13.90</name>
</gene>
<keyword id="KW-0325">Glycoprotein</keyword>
<keyword id="KW-0597">Phosphoprotein</keyword>
<keyword id="KW-1185">Reference proteome</keyword>
<keyword id="KW-0732">Signal</keyword>
<keyword id="KW-0926">Vacuole</keyword>
<evidence type="ECO:0000250" key="1"/>
<evidence type="ECO:0000250" key="2">
    <source>
        <dbReference type="UniProtKB" id="Q9SD07"/>
    </source>
</evidence>
<evidence type="ECO:0000255" key="3"/>
<evidence type="ECO:0000255" key="4">
    <source>
        <dbReference type="PROSITE-ProRule" id="PRU00498"/>
    </source>
</evidence>
<evidence type="ECO:0000269" key="5">
    <source>
    </source>
</evidence>
<evidence type="ECO:0000303" key="6">
    <source>
    </source>
</evidence>
<evidence type="ECO:0000305" key="7"/>
<evidence type="ECO:0000312" key="8">
    <source>
        <dbReference type="Araport" id="AT3G51450"/>
    </source>
</evidence>
<evidence type="ECO:0000312" key="9">
    <source>
        <dbReference type="EMBL" id="CAB63009.1"/>
    </source>
</evidence>
<evidence type="ECO:0000312" key="10">
    <source>
        <dbReference type="Proteomes" id="UP000006548"/>
    </source>
</evidence>
<comment type="subcellular location">
    <subcellularLocation>
        <location evidence="1">Vacuole</location>
    </subcellularLocation>
</comment>
<comment type="induction">
    <text evidence="5">By salicylic acid (SA), jasmonic acid (MJ), ethylene (ET), wounding, and infection with the fungal pathogen A.brassicicola and cucumber mosaic virus (CMV), both in local and systemic tissues.</text>
</comment>
<comment type="similarity">
    <text evidence="7">Belongs to the strictosidine synthase family.</text>
</comment>
<dbReference type="EMBL" id="AL133452">
    <property type="protein sequence ID" value="CAB63009.1"/>
    <property type="molecule type" value="Genomic_DNA"/>
</dbReference>
<dbReference type="EMBL" id="CP002686">
    <property type="protein sequence ID" value="AEE78794.1"/>
    <property type="molecule type" value="Genomic_DNA"/>
</dbReference>
<dbReference type="EMBL" id="AY075676">
    <property type="protein sequence ID" value="AAL77683.1"/>
    <property type="molecule type" value="mRNA"/>
</dbReference>
<dbReference type="EMBL" id="AY143926">
    <property type="protein sequence ID" value="AAN28865.1"/>
    <property type="molecule type" value="mRNA"/>
</dbReference>
<dbReference type="EMBL" id="AK175245">
    <property type="protein sequence ID" value="BAD43008.1"/>
    <property type="molecule type" value="mRNA"/>
</dbReference>
<dbReference type="EMBL" id="AK175564">
    <property type="protein sequence ID" value="BAD43327.1"/>
    <property type="molecule type" value="mRNA"/>
</dbReference>
<dbReference type="EMBL" id="AY087851">
    <property type="protein sequence ID" value="AAM65404.1"/>
    <property type="molecule type" value="mRNA"/>
</dbReference>
<dbReference type="PIR" id="T45776">
    <property type="entry name" value="T45776"/>
</dbReference>
<dbReference type="RefSeq" id="NP_190713.1">
    <property type="nucleotide sequence ID" value="NM_115004.5"/>
</dbReference>
<dbReference type="SMR" id="Q9SD04"/>
<dbReference type="FunCoup" id="Q9SD04">
    <property type="interactions" value="21"/>
</dbReference>
<dbReference type="IntAct" id="Q9SD04">
    <property type="interactions" value="3"/>
</dbReference>
<dbReference type="STRING" id="3702.Q9SD04"/>
<dbReference type="GlyCosmos" id="Q9SD04">
    <property type="glycosylation" value="3 sites, No reported glycans"/>
</dbReference>
<dbReference type="GlyGen" id="Q9SD04">
    <property type="glycosylation" value="3 sites"/>
</dbReference>
<dbReference type="PaxDb" id="3702-AT3G51450.1"/>
<dbReference type="ProteomicsDB" id="245208"/>
<dbReference type="EnsemblPlants" id="AT3G51450.1">
    <property type="protein sequence ID" value="AT3G51450.1"/>
    <property type="gene ID" value="AT3G51450"/>
</dbReference>
<dbReference type="GeneID" id="824308"/>
<dbReference type="Gramene" id="AT3G51450.1">
    <property type="protein sequence ID" value="AT3G51450.1"/>
    <property type="gene ID" value="AT3G51450"/>
</dbReference>
<dbReference type="KEGG" id="ath:AT3G51450"/>
<dbReference type="Araport" id="AT3G51450"/>
<dbReference type="TAIR" id="AT3G51450"/>
<dbReference type="eggNOG" id="KOG1520">
    <property type="taxonomic scope" value="Eukaryota"/>
</dbReference>
<dbReference type="HOGENOM" id="CLU_023267_0_2_1"/>
<dbReference type="InParanoid" id="Q9SD04"/>
<dbReference type="OMA" id="PVRRCSK"/>
<dbReference type="OrthoDB" id="5307922at2759"/>
<dbReference type="PhylomeDB" id="Q9SD04"/>
<dbReference type="BRENDA" id="4.3.3.2">
    <property type="organism ID" value="399"/>
</dbReference>
<dbReference type="PRO" id="PR:Q9SD04"/>
<dbReference type="Proteomes" id="UP000006548">
    <property type="component" value="Chromosome 3"/>
</dbReference>
<dbReference type="ExpressionAtlas" id="Q9SD04">
    <property type="expression patterns" value="baseline and differential"/>
</dbReference>
<dbReference type="GO" id="GO:0005773">
    <property type="term" value="C:vacuole"/>
    <property type="evidence" value="ECO:0007669"/>
    <property type="project" value="UniProtKB-SubCell"/>
</dbReference>
<dbReference type="GO" id="GO:0009723">
    <property type="term" value="P:response to ethylene"/>
    <property type="evidence" value="ECO:0000270"/>
    <property type="project" value="UniProtKB"/>
</dbReference>
<dbReference type="GO" id="GO:0009620">
    <property type="term" value="P:response to fungus"/>
    <property type="evidence" value="ECO:0000270"/>
    <property type="project" value="UniProtKB"/>
</dbReference>
<dbReference type="GO" id="GO:0009753">
    <property type="term" value="P:response to jasmonic acid"/>
    <property type="evidence" value="ECO:0000270"/>
    <property type="project" value="UniProtKB"/>
</dbReference>
<dbReference type="GO" id="GO:0009751">
    <property type="term" value="P:response to salicylic acid"/>
    <property type="evidence" value="ECO:0000270"/>
    <property type="project" value="UniProtKB"/>
</dbReference>
<dbReference type="GO" id="GO:0009615">
    <property type="term" value="P:response to virus"/>
    <property type="evidence" value="ECO:0000270"/>
    <property type="project" value="UniProtKB"/>
</dbReference>
<dbReference type="GO" id="GO:0009611">
    <property type="term" value="P:response to wounding"/>
    <property type="evidence" value="ECO:0000270"/>
    <property type="project" value="UniProtKB"/>
</dbReference>
<dbReference type="FunFam" id="2.120.10.30:FF:000073">
    <property type="entry name" value="Protein STRICTOSIDINE SYNTHASE-LIKE 6"/>
    <property type="match status" value="1"/>
</dbReference>
<dbReference type="Gene3D" id="2.120.10.30">
    <property type="entry name" value="TolB, C-terminal domain"/>
    <property type="match status" value="1"/>
</dbReference>
<dbReference type="InterPro" id="IPR011042">
    <property type="entry name" value="6-blade_b-propeller_TolB-like"/>
</dbReference>
<dbReference type="InterPro" id="IPR018119">
    <property type="entry name" value="Strictosidine_synth_cons-reg"/>
</dbReference>
<dbReference type="PANTHER" id="PTHR10426:SF88">
    <property type="entry name" value="ADIPOCYTE PLASMA MEMBRANE-ASSOCIATED PROTEIN HEMOMUCIN-RELATED"/>
    <property type="match status" value="1"/>
</dbReference>
<dbReference type="PANTHER" id="PTHR10426">
    <property type="entry name" value="STRICTOSIDINE SYNTHASE-RELATED"/>
    <property type="match status" value="1"/>
</dbReference>
<dbReference type="Pfam" id="PF20067">
    <property type="entry name" value="SSL_N"/>
    <property type="match status" value="1"/>
</dbReference>
<dbReference type="Pfam" id="PF03088">
    <property type="entry name" value="Str_synth"/>
    <property type="match status" value="1"/>
</dbReference>
<dbReference type="SUPFAM" id="SSF63829">
    <property type="entry name" value="Calcium-dependent phosphotriesterase"/>
    <property type="match status" value="1"/>
</dbReference>
<organism evidence="10">
    <name type="scientific">Arabidopsis thaliana</name>
    <name type="common">Mouse-ear cress</name>
    <dbReference type="NCBI Taxonomy" id="3702"/>
    <lineage>
        <taxon>Eukaryota</taxon>
        <taxon>Viridiplantae</taxon>
        <taxon>Streptophyta</taxon>
        <taxon>Embryophyta</taxon>
        <taxon>Tracheophyta</taxon>
        <taxon>Spermatophyta</taxon>
        <taxon>Magnoliopsida</taxon>
        <taxon>eudicotyledons</taxon>
        <taxon>Gunneridae</taxon>
        <taxon>Pentapetalae</taxon>
        <taxon>rosids</taxon>
        <taxon>malvids</taxon>
        <taxon>Brassicales</taxon>
        <taxon>Brassicaceae</taxon>
        <taxon>Camelineae</taxon>
        <taxon>Arabidopsis</taxon>
    </lineage>
</organism>
<protein>
    <recommendedName>
        <fullName evidence="6">Protein STRICTOSIDINE SYNTHASE-LIKE 7</fullName>
        <shortName evidence="6">AtSSL7</shortName>
    </recommendedName>
</protein>
<reference key="1">
    <citation type="journal article" date="2000" name="Nature">
        <title>Sequence and analysis of chromosome 3 of the plant Arabidopsis thaliana.</title>
        <authorList>
            <person name="Salanoubat M."/>
            <person name="Lemcke K."/>
            <person name="Rieger M."/>
            <person name="Ansorge W."/>
            <person name="Unseld M."/>
            <person name="Fartmann B."/>
            <person name="Valle G."/>
            <person name="Bloecker H."/>
            <person name="Perez-Alonso M."/>
            <person name="Obermaier B."/>
            <person name="Delseny M."/>
            <person name="Boutry M."/>
            <person name="Grivell L.A."/>
            <person name="Mache R."/>
            <person name="Puigdomenech P."/>
            <person name="De Simone V."/>
            <person name="Choisne N."/>
            <person name="Artiguenave F."/>
            <person name="Robert C."/>
            <person name="Brottier P."/>
            <person name="Wincker P."/>
            <person name="Cattolico L."/>
            <person name="Weissenbach J."/>
            <person name="Saurin W."/>
            <person name="Quetier F."/>
            <person name="Schaefer M."/>
            <person name="Mueller-Auer S."/>
            <person name="Gabel C."/>
            <person name="Fuchs M."/>
            <person name="Benes V."/>
            <person name="Wurmbach E."/>
            <person name="Drzonek H."/>
            <person name="Erfle H."/>
            <person name="Jordan N."/>
            <person name="Bangert S."/>
            <person name="Wiedelmann R."/>
            <person name="Kranz H."/>
            <person name="Voss H."/>
            <person name="Holland R."/>
            <person name="Brandt P."/>
            <person name="Nyakatura G."/>
            <person name="Vezzi A."/>
            <person name="D'Angelo M."/>
            <person name="Pallavicini A."/>
            <person name="Toppo S."/>
            <person name="Simionati B."/>
            <person name="Conrad A."/>
            <person name="Hornischer K."/>
            <person name="Kauer G."/>
            <person name="Loehnert T.-H."/>
            <person name="Nordsiek G."/>
            <person name="Reichelt J."/>
            <person name="Scharfe M."/>
            <person name="Schoen O."/>
            <person name="Bargues M."/>
            <person name="Terol J."/>
            <person name="Climent J."/>
            <person name="Navarro P."/>
            <person name="Collado C."/>
            <person name="Perez-Perez A."/>
            <person name="Ottenwaelder B."/>
            <person name="Duchemin D."/>
            <person name="Cooke R."/>
            <person name="Laudie M."/>
            <person name="Berger-Llauro C."/>
            <person name="Purnelle B."/>
            <person name="Masuy D."/>
            <person name="de Haan M."/>
            <person name="Maarse A.C."/>
            <person name="Alcaraz J.-P."/>
            <person name="Cottet A."/>
            <person name="Casacuberta E."/>
            <person name="Monfort A."/>
            <person name="Argiriou A."/>
            <person name="Flores M."/>
            <person name="Liguori R."/>
            <person name="Vitale D."/>
            <person name="Mannhaupt G."/>
            <person name="Haase D."/>
            <person name="Schoof H."/>
            <person name="Rudd S."/>
            <person name="Zaccaria P."/>
            <person name="Mewes H.-W."/>
            <person name="Mayer K.F.X."/>
            <person name="Kaul S."/>
            <person name="Town C.D."/>
            <person name="Koo H.L."/>
            <person name="Tallon L.J."/>
            <person name="Jenkins J."/>
            <person name="Rooney T."/>
            <person name="Rizzo M."/>
            <person name="Walts A."/>
            <person name="Utterback T."/>
            <person name="Fujii C.Y."/>
            <person name="Shea T.P."/>
            <person name="Creasy T.H."/>
            <person name="Haas B."/>
            <person name="Maiti R."/>
            <person name="Wu D."/>
            <person name="Peterson J."/>
            <person name="Van Aken S."/>
            <person name="Pai G."/>
            <person name="Militscher J."/>
            <person name="Sellers P."/>
            <person name="Gill J.E."/>
            <person name="Feldblyum T.V."/>
            <person name="Preuss D."/>
            <person name="Lin X."/>
            <person name="Nierman W.C."/>
            <person name="Salzberg S.L."/>
            <person name="White O."/>
            <person name="Venter J.C."/>
            <person name="Fraser C.M."/>
            <person name="Kaneko T."/>
            <person name="Nakamura Y."/>
            <person name="Sato S."/>
            <person name="Kato T."/>
            <person name="Asamizu E."/>
            <person name="Sasamoto S."/>
            <person name="Kimura T."/>
            <person name="Idesawa K."/>
            <person name="Kawashima K."/>
            <person name="Kishida Y."/>
            <person name="Kiyokawa C."/>
            <person name="Kohara M."/>
            <person name="Matsumoto M."/>
            <person name="Matsuno A."/>
            <person name="Muraki A."/>
            <person name="Nakayama S."/>
            <person name="Nakazaki N."/>
            <person name="Shinpo S."/>
            <person name="Takeuchi C."/>
            <person name="Wada T."/>
            <person name="Watanabe A."/>
            <person name="Yamada M."/>
            <person name="Yasuda M."/>
            <person name="Tabata S."/>
        </authorList>
    </citation>
    <scope>NUCLEOTIDE SEQUENCE [LARGE SCALE GENOMIC DNA]</scope>
    <source>
        <strain>cv. Columbia</strain>
    </source>
</reference>
<reference key="2">
    <citation type="journal article" date="2017" name="Plant J.">
        <title>Araport11: a complete reannotation of the Arabidopsis thaliana reference genome.</title>
        <authorList>
            <person name="Cheng C.Y."/>
            <person name="Krishnakumar V."/>
            <person name="Chan A.P."/>
            <person name="Thibaud-Nissen F."/>
            <person name="Schobel S."/>
            <person name="Town C.D."/>
        </authorList>
    </citation>
    <scope>GENOME REANNOTATION</scope>
    <source>
        <strain>cv. Columbia</strain>
    </source>
</reference>
<reference key="3">
    <citation type="journal article" date="2003" name="Science">
        <title>Empirical analysis of transcriptional activity in the Arabidopsis genome.</title>
        <authorList>
            <person name="Yamada K."/>
            <person name="Lim J."/>
            <person name="Dale J.M."/>
            <person name="Chen H."/>
            <person name="Shinn P."/>
            <person name="Palm C.J."/>
            <person name="Southwick A.M."/>
            <person name="Wu H.C."/>
            <person name="Kim C.J."/>
            <person name="Nguyen M."/>
            <person name="Pham P.K."/>
            <person name="Cheuk R.F."/>
            <person name="Karlin-Newmann G."/>
            <person name="Liu S.X."/>
            <person name="Lam B."/>
            <person name="Sakano H."/>
            <person name="Wu T."/>
            <person name="Yu G."/>
            <person name="Miranda M."/>
            <person name="Quach H.L."/>
            <person name="Tripp M."/>
            <person name="Chang C.H."/>
            <person name="Lee J.M."/>
            <person name="Toriumi M.J."/>
            <person name="Chan M.M."/>
            <person name="Tang C.C."/>
            <person name="Onodera C.S."/>
            <person name="Deng J.M."/>
            <person name="Akiyama K."/>
            <person name="Ansari Y."/>
            <person name="Arakawa T."/>
            <person name="Banh J."/>
            <person name="Banno F."/>
            <person name="Bowser L."/>
            <person name="Brooks S.Y."/>
            <person name="Carninci P."/>
            <person name="Chao Q."/>
            <person name="Choy N."/>
            <person name="Enju A."/>
            <person name="Goldsmith A.D."/>
            <person name="Gurjal M."/>
            <person name="Hansen N.F."/>
            <person name="Hayashizaki Y."/>
            <person name="Johnson-Hopson C."/>
            <person name="Hsuan V.W."/>
            <person name="Iida K."/>
            <person name="Karnes M."/>
            <person name="Khan S."/>
            <person name="Koesema E."/>
            <person name="Ishida J."/>
            <person name="Jiang P.X."/>
            <person name="Jones T."/>
            <person name="Kawai J."/>
            <person name="Kamiya A."/>
            <person name="Meyers C."/>
            <person name="Nakajima M."/>
            <person name="Narusaka M."/>
            <person name="Seki M."/>
            <person name="Sakurai T."/>
            <person name="Satou M."/>
            <person name="Tamse R."/>
            <person name="Vaysberg M."/>
            <person name="Wallender E.K."/>
            <person name="Wong C."/>
            <person name="Yamamura Y."/>
            <person name="Yuan S."/>
            <person name="Shinozaki K."/>
            <person name="Davis R.W."/>
            <person name="Theologis A."/>
            <person name="Ecker J.R."/>
        </authorList>
    </citation>
    <scope>NUCLEOTIDE SEQUENCE [LARGE SCALE MRNA]</scope>
    <source>
        <strain>cv. Columbia</strain>
    </source>
</reference>
<reference key="4">
    <citation type="submission" date="2004-09" db="EMBL/GenBank/DDBJ databases">
        <title>Large-scale analysis of RIKEN Arabidopsis full-length (RAFL) cDNAs.</title>
        <authorList>
            <person name="Totoki Y."/>
            <person name="Seki M."/>
            <person name="Ishida J."/>
            <person name="Nakajima M."/>
            <person name="Enju A."/>
            <person name="Kamiya A."/>
            <person name="Narusaka M."/>
            <person name="Shin-i T."/>
            <person name="Nakagawa M."/>
            <person name="Sakamoto N."/>
            <person name="Oishi K."/>
            <person name="Kohara Y."/>
            <person name="Kobayashi M."/>
            <person name="Toyoda A."/>
            <person name="Sakaki Y."/>
            <person name="Sakurai T."/>
            <person name="Iida K."/>
            <person name="Akiyama K."/>
            <person name="Satou M."/>
            <person name="Toyoda T."/>
            <person name="Konagaya A."/>
            <person name="Carninci P."/>
            <person name="Kawai J."/>
            <person name="Hayashizaki Y."/>
            <person name="Shinozaki K."/>
        </authorList>
    </citation>
    <scope>NUCLEOTIDE SEQUENCE [LARGE SCALE MRNA]</scope>
    <source>
        <strain>cv. Columbia</strain>
    </source>
</reference>
<reference key="5">
    <citation type="submission" date="2002-03" db="EMBL/GenBank/DDBJ databases">
        <title>Full-length cDNA from Arabidopsis thaliana.</title>
        <authorList>
            <person name="Brover V.V."/>
            <person name="Troukhan M.E."/>
            <person name="Alexandrov N.A."/>
            <person name="Lu Y.-P."/>
            <person name="Flavell R.B."/>
            <person name="Feldmann K.A."/>
        </authorList>
    </citation>
    <scope>NUCLEOTIDE SEQUENCE [LARGE SCALE MRNA]</scope>
</reference>
<reference key="6">
    <citation type="journal article" date="2000" name="Biochem. Biophys. Res. Commun.">
        <title>Animal and plant members of a gene family with similarity to alkaloid-synthesizing enzymes.</title>
        <authorList>
            <person name="Fabbri M."/>
            <person name="Delp G."/>
            <person name="Schmidt O."/>
            <person name="Theopold U."/>
        </authorList>
    </citation>
    <scope>GENE FAMILY</scope>
    <scope>NOMENCLATURE</scope>
</reference>
<reference key="7">
    <citation type="journal article" date="2009" name="Plant Biol.">
        <title>Phylogenetic and transcriptional analysis of a strictosidine synthase-like gene family in Arabidopsis thaliana reveals involvement in plant defence responses.</title>
        <authorList>
            <person name="Sohani M.M."/>
            <person name="Schenk P.M."/>
            <person name="Schultz C.J."/>
            <person name="Schmidt O."/>
        </authorList>
    </citation>
    <scope>INDUCTION BY BIOTIC AND ABIOTIC STRESSES</scope>
    <scope>GENE FAMILY</scope>
    <source>
        <strain>cv. Columbia</strain>
    </source>
</reference>
<accession>Q9SD04</accession>
<feature type="signal peptide" evidence="3">
    <location>
        <begin position="1"/>
        <end position="25"/>
    </location>
</feature>
<feature type="chain" id="PRO_0000431594" description="Protein STRICTOSIDINE SYNTHASE-LIKE 7" evidence="3">
    <location>
        <begin position="26"/>
        <end position="371"/>
    </location>
</feature>
<feature type="modified residue" description="Phosphotyrosine" evidence="2">
    <location>
        <position position="303"/>
    </location>
</feature>
<feature type="glycosylation site" description="N-linked (GlcNAc...) asparagine" evidence="4">
    <location>
        <position position="101"/>
    </location>
</feature>
<feature type="glycosylation site" description="N-linked (GlcNAc...) asparagine" evidence="4">
    <location>
        <position position="137"/>
    </location>
</feature>
<feature type="glycosylation site" description="N-linked (GlcNAc...) asparagine" evidence="4">
    <location>
        <position position="285"/>
    </location>
</feature>
<proteinExistence type="evidence at transcript level"/>
<name>SSL7_ARATH</name>
<sequence length="371" mass="41124">MPVLFSSRSLILSIIVPLLISIALYKLDTFDPAIVPSDAFTSSATSLPPLINDEFLTGAEFIGVGLLNIPEDIAYHKESNLIYTGCVDGWVKRVKVADSVNDSVVEDWVNTGGRPLGIAFGIHGEVIVADVHKGLLNISGDGKKTELLTDEADGVKFKLTDAVTVADNGVLYFTDASYKYTLNQLSLDMLEGKPFGRLLSFDPTTRVTKVLLKDLYFANGITISPDQTHLIFCETPMKRCSKYYISEERVEVFTQSLPGYPDNIRYDGDGHYWIALPSGVTTLWNISLKYPFLRKLTAMVAKYGVDLMFMENAGVLQVDLDGNPIAYYHDPKLSHIATCDKIGKYLYCGSLSQSHILRLDLLKYPAQNKKL</sequence>